<gene>
    <name evidence="1" type="primary">rsxE</name>
    <name type="ordered locus">BWG_1447</name>
</gene>
<accession>C4ZY95</accession>
<reference key="1">
    <citation type="journal article" date="2009" name="J. Bacteriol.">
        <title>Genomic sequencing reveals regulatory mutations and recombinational events in the widely used MC4100 lineage of Escherichia coli K-12.</title>
        <authorList>
            <person name="Ferenci T."/>
            <person name="Zhou Z."/>
            <person name="Betteridge T."/>
            <person name="Ren Y."/>
            <person name="Liu Y."/>
            <person name="Feng L."/>
            <person name="Reeves P.R."/>
            <person name="Wang L."/>
        </authorList>
    </citation>
    <scope>NUCLEOTIDE SEQUENCE [LARGE SCALE GENOMIC DNA]</scope>
    <source>
        <strain>K12 / MC4100 / BW2952</strain>
    </source>
</reference>
<keyword id="KW-0997">Cell inner membrane</keyword>
<keyword id="KW-1003">Cell membrane</keyword>
<keyword id="KW-0249">Electron transport</keyword>
<keyword id="KW-0472">Membrane</keyword>
<keyword id="KW-1278">Translocase</keyword>
<keyword id="KW-0812">Transmembrane</keyword>
<keyword id="KW-1133">Transmembrane helix</keyword>
<keyword id="KW-0813">Transport</keyword>
<name>RSXE_ECOBW</name>
<proteinExistence type="inferred from homology"/>
<protein>
    <recommendedName>
        <fullName evidence="1">Ion-translocating oxidoreductase complex subunit E</fullName>
        <ecNumber evidence="1">7.-.-.-</ecNumber>
    </recommendedName>
    <alternativeName>
        <fullName evidence="1">Rsx electron transport complex subunit E</fullName>
    </alternativeName>
</protein>
<sequence length="231" mass="24459">MSEIKDVIVQGLWKNNSALVQLLGLCPLLAVTSTATNALGLGLATTLVLTLTNLTISTLRHWTPAEIRIPIYVMIIASVVSAVQMLINAYAFGLYQSLGIFIPLIVTNCIVVGRAEAFAAKKGPALSALDGFSIGMGATCAMFVLGSLREIIGNGTLFDGADALLGSWAKVLRVEIFHTDSPFLLAMLPPGAFIGLGLMLAGKYLIDERMKKRRAEAAAERALPNGETGNV</sequence>
<feature type="chain" id="PRO_1000206389" description="Ion-translocating oxidoreductase complex subunit E">
    <location>
        <begin position="1"/>
        <end position="231"/>
    </location>
</feature>
<feature type="transmembrane region" description="Helical" evidence="1">
    <location>
        <begin position="18"/>
        <end position="38"/>
    </location>
</feature>
<feature type="transmembrane region" description="Helical" evidence="1">
    <location>
        <begin position="39"/>
        <end position="59"/>
    </location>
</feature>
<feature type="transmembrane region" description="Helical" evidence="1">
    <location>
        <begin position="63"/>
        <end position="83"/>
    </location>
</feature>
<feature type="transmembrane region" description="Helical" evidence="1">
    <location>
        <begin position="86"/>
        <end position="106"/>
    </location>
</feature>
<feature type="transmembrane region" description="Helical" evidence="1">
    <location>
        <begin position="125"/>
        <end position="145"/>
    </location>
</feature>
<feature type="transmembrane region" description="Helical" evidence="1">
    <location>
        <begin position="182"/>
        <end position="202"/>
    </location>
</feature>
<comment type="function">
    <text evidence="1">Part of a membrane-bound complex that couples electron transfer with translocation of ions across the membrane. Required to maintain the reduced state of SoxR.</text>
</comment>
<comment type="subunit">
    <text evidence="1">The complex is composed of six subunits: RsxA, RsxB, RsxC, RsxD, RsxE and RsxG.</text>
</comment>
<comment type="subcellular location">
    <subcellularLocation>
        <location evidence="1">Cell inner membrane</location>
        <topology evidence="1">Multi-pass membrane protein</topology>
    </subcellularLocation>
</comment>
<comment type="similarity">
    <text evidence="1">Belongs to the NqrDE/RnfAE family.</text>
</comment>
<organism>
    <name type="scientific">Escherichia coli (strain K12 / MC4100 / BW2952)</name>
    <dbReference type="NCBI Taxonomy" id="595496"/>
    <lineage>
        <taxon>Bacteria</taxon>
        <taxon>Pseudomonadati</taxon>
        <taxon>Pseudomonadota</taxon>
        <taxon>Gammaproteobacteria</taxon>
        <taxon>Enterobacterales</taxon>
        <taxon>Enterobacteriaceae</taxon>
        <taxon>Escherichia</taxon>
    </lineage>
</organism>
<evidence type="ECO:0000255" key="1">
    <source>
        <dbReference type="HAMAP-Rule" id="MF_00478"/>
    </source>
</evidence>
<dbReference type="EC" id="7.-.-.-" evidence="1"/>
<dbReference type="EMBL" id="CP001396">
    <property type="protein sequence ID" value="ACR64490.1"/>
    <property type="molecule type" value="Genomic_DNA"/>
</dbReference>
<dbReference type="RefSeq" id="WP_001289652.1">
    <property type="nucleotide sequence ID" value="NC_012759.1"/>
</dbReference>
<dbReference type="SMR" id="C4ZY95"/>
<dbReference type="KEGG" id="ebw:BWG_1447"/>
<dbReference type="HOGENOM" id="CLU_046659_1_0_6"/>
<dbReference type="GO" id="GO:0005886">
    <property type="term" value="C:plasma membrane"/>
    <property type="evidence" value="ECO:0007669"/>
    <property type="project" value="UniProtKB-SubCell"/>
</dbReference>
<dbReference type="GO" id="GO:0022900">
    <property type="term" value="P:electron transport chain"/>
    <property type="evidence" value="ECO:0007669"/>
    <property type="project" value="UniProtKB-UniRule"/>
</dbReference>
<dbReference type="HAMAP" id="MF_00478">
    <property type="entry name" value="RsxE_RnfE"/>
    <property type="match status" value="1"/>
</dbReference>
<dbReference type="InterPro" id="IPR003667">
    <property type="entry name" value="NqrDE/RnfAE"/>
</dbReference>
<dbReference type="InterPro" id="IPR010968">
    <property type="entry name" value="RnfE"/>
</dbReference>
<dbReference type="NCBIfam" id="NF009070">
    <property type="entry name" value="PRK12405.1"/>
    <property type="match status" value="1"/>
</dbReference>
<dbReference type="NCBIfam" id="TIGR01948">
    <property type="entry name" value="rnfE"/>
    <property type="match status" value="1"/>
</dbReference>
<dbReference type="PANTHER" id="PTHR30586">
    <property type="entry name" value="ELECTRON TRANSPORT COMPLEX PROTEIN RNFE"/>
    <property type="match status" value="1"/>
</dbReference>
<dbReference type="PANTHER" id="PTHR30586:SF0">
    <property type="entry name" value="ION-TRANSLOCATING OXIDOREDUCTASE COMPLEX SUBUNIT E"/>
    <property type="match status" value="1"/>
</dbReference>
<dbReference type="Pfam" id="PF02508">
    <property type="entry name" value="Rnf-Nqr"/>
    <property type="match status" value="1"/>
</dbReference>
<dbReference type="PIRSF" id="PIRSF006102">
    <property type="entry name" value="NQR_DE"/>
    <property type="match status" value="1"/>
</dbReference>